<keyword id="KW-0007">Acetylation</keyword>
<keyword id="KW-0143">Chaperone</keyword>
<keyword id="KW-0903">Direct protein sequencing</keyword>
<keyword id="KW-0496">Mitochondrion</keyword>
<keyword id="KW-0597">Phosphoprotein</keyword>
<keyword id="KW-1185">Reference proteome</keyword>
<keyword id="KW-0346">Stress response</keyword>
<evidence type="ECO:0000250" key="1"/>
<evidence type="ECO:0000250" key="2">
    <source>
        <dbReference type="UniProtKB" id="P61604"/>
    </source>
</evidence>
<evidence type="ECO:0000250" key="3">
    <source>
        <dbReference type="UniProtKB" id="Q64433"/>
    </source>
</evidence>
<evidence type="ECO:0000269" key="4">
    <source>
    </source>
</evidence>
<evidence type="ECO:0000269" key="5">
    <source>
    </source>
</evidence>
<evidence type="ECO:0000305" key="6"/>
<comment type="function">
    <text evidence="2">Co-chaperonin implicated in mitochondrial protein import and macromolecular assembly. Together with Hsp60, facilitates the correct folding of imported proteins. May also prevent misfolding and promote the refolding and proper assembly of unfolded polypeptides generated under stress conditions in the mitochondrial matrix. The functional units of these chaperonins consist of heptameric rings of the large subunit Hsp60, which function as a back-to-back double ring. In a cyclic reaction, Hsp60 ring complexes bind one unfolded substrate protein per ring, followed by the binding of ATP and association with 2 heptameric rings of the co-chaperonin Hsp10. This leads to sequestration of the substrate protein in the inner cavity of Hsp60 where, for a certain period of time, it can fold undisturbed by other cell components. Synchronous hydrolysis of ATP in all Hsp60 subunits results in the dissociation of the chaperonin rings and the release of ADP and the folded substrate protein.</text>
</comment>
<comment type="subunit">
    <text evidence="2">Homoheptamer arranged in a ring structure. 2 heptameric Hsp10 rings interact with a Hsp60 tetradecamer in the structure of a back-to-back double heptameric ring to form the symmetrical football complex.</text>
</comment>
<comment type="subcellular location">
    <subcellularLocation>
        <location evidence="2">Mitochondrion matrix</location>
    </subcellularLocation>
</comment>
<comment type="induction">
    <text>By stress.</text>
</comment>
<comment type="similarity">
    <text evidence="6">Belongs to the GroES chaperonin family.</text>
</comment>
<accession>P26772</accession>
<feature type="initiator methionine" description="Removed" evidence="4 5">
    <location>
        <position position="1"/>
    </location>
</feature>
<feature type="chain" id="PRO_0000174919" description="10 kDa heat shock protein, mitochondrial">
    <location>
        <begin position="2"/>
        <end position="102"/>
    </location>
</feature>
<feature type="modified residue" description="N-acetylalanine" evidence="4 5">
    <location>
        <position position="2"/>
    </location>
</feature>
<feature type="modified residue" description="N6-acetyllysine" evidence="3">
    <location>
        <position position="8"/>
    </location>
</feature>
<feature type="modified residue" description="N6-succinyllysine" evidence="3">
    <location>
        <position position="28"/>
    </location>
</feature>
<feature type="modified residue" description="N6-acetyllysine; alternate" evidence="3">
    <location>
        <position position="40"/>
    </location>
</feature>
<feature type="modified residue" description="N6-malonyllysine; alternate" evidence="1">
    <location>
        <position position="40"/>
    </location>
</feature>
<feature type="modified residue" description="N6-succinyllysine; alternate" evidence="3">
    <location>
        <position position="40"/>
    </location>
</feature>
<feature type="modified residue" description="N6-malonyllysine; alternate" evidence="1">
    <location>
        <position position="54"/>
    </location>
</feature>
<feature type="modified residue" description="N6-succinyllysine; alternate" evidence="3">
    <location>
        <position position="54"/>
    </location>
</feature>
<feature type="modified residue" description="N6-acetyllysine; alternate" evidence="2">
    <location>
        <position position="56"/>
    </location>
</feature>
<feature type="modified residue" description="N6-malonyllysine; alternate" evidence="1">
    <location>
        <position position="56"/>
    </location>
</feature>
<feature type="modified residue" description="N6-succinyllysine; alternate" evidence="3">
    <location>
        <position position="56"/>
    </location>
</feature>
<feature type="modified residue" description="N6-acetyllysine; alternate" evidence="3">
    <location>
        <position position="66"/>
    </location>
</feature>
<feature type="modified residue" description="N6-succinyllysine; alternate" evidence="3">
    <location>
        <position position="66"/>
    </location>
</feature>
<feature type="modified residue" description="N6-acetyllysine; alternate" evidence="3">
    <location>
        <position position="70"/>
    </location>
</feature>
<feature type="modified residue" description="N6-succinyllysine; alternate" evidence="3">
    <location>
        <position position="70"/>
    </location>
</feature>
<feature type="modified residue" description="Phosphothreonine" evidence="2">
    <location>
        <position position="79"/>
    </location>
</feature>
<feature type="modified residue" description="N6-acetyllysine; alternate" evidence="3">
    <location>
        <position position="80"/>
    </location>
</feature>
<feature type="modified residue" description="N6-succinyllysine; alternate" evidence="3">
    <location>
        <position position="80"/>
    </location>
</feature>
<feature type="modified residue" description="N6-acetyllysine; alternate" evidence="2">
    <location>
        <position position="86"/>
    </location>
</feature>
<feature type="modified residue" description="N6-succinyllysine; alternate" evidence="3">
    <location>
        <position position="86"/>
    </location>
</feature>
<feature type="modified residue" description="N6-acetyllysine" evidence="2">
    <location>
        <position position="99"/>
    </location>
</feature>
<protein>
    <recommendedName>
        <fullName>10 kDa heat shock protein, mitochondrial</fullName>
        <shortName>Hsp10</shortName>
    </recommendedName>
    <alternativeName>
        <fullName>10 kDa chaperonin</fullName>
    </alternativeName>
    <alternativeName>
        <fullName>Chaperonin 10</fullName>
        <shortName>CPN10</shortName>
    </alternativeName>
</protein>
<proteinExistence type="evidence at protein level"/>
<name>CH10_RAT</name>
<dbReference type="EMBL" id="X71429">
    <property type="protein sequence ID" value="CAA50560.1"/>
    <property type="molecule type" value="mRNA"/>
</dbReference>
<dbReference type="EMBL" id="BC058492">
    <property type="protein sequence ID" value="AAH58492.1"/>
    <property type="molecule type" value="mRNA"/>
</dbReference>
<dbReference type="PIR" id="S41750">
    <property type="entry name" value="S41750"/>
</dbReference>
<dbReference type="SMR" id="P26772"/>
<dbReference type="FunCoup" id="P26772">
    <property type="interactions" value="1991"/>
</dbReference>
<dbReference type="IntAct" id="P26772">
    <property type="interactions" value="1"/>
</dbReference>
<dbReference type="STRING" id="10116.ENSRNOP00000068700"/>
<dbReference type="iPTMnet" id="P26772"/>
<dbReference type="PhosphoSitePlus" id="P26772"/>
<dbReference type="SwissPalm" id="P26772"/>
<dbReference type="jPOST" id="P26772"/>
<dbReference type="PaxDb" id="10116-ENSRNOP00000020066"/>
<dbReference type="UCSC" id="RGD:2844">
    <property type="organism name" value="rat"/>
</dbReference>
<dbReference type="AGR" id="RGD:2844"/>
<dbReference type="RGD" id="2844">
    <property type="gene designation" value="Hspe1"/>
</dbReference>
<dbReference type="eggNOG" id="KOG1641">
    <property type="taxonomic scope" value="Eukaryota"/>
</dbReference>
<dbReference type="InParanoid" id="P26772"/>
<dbReference type="PhylomeDB" id="P26772"/>
<dbReference type="TreeFam" id="TF313814"/>
<dbReference type="Reactome" id="R-RNO-9013408">
    <property type="pathway name" value="RHOG GTPase cycle"/>
</dbReference>
<dbReference type="PRO" id="PR:P26772"/>
<dbReference type="Proteomes" id="UP000002494">
    <property type="component" value="Unplaced"/>
</dbReference>
<dbReference type="GO" id="GO:0005759">
    <property type="term" value="C:mitochondrial matrix"/>
    <property type="evidence" value="ECO:0000314"/>
    <property type="project" value="RGD"/>
</dbReference>
<dbReference type="GO" id="GO:0005739">
    <property type="term" value="C:mitochondrion"/>
    <property type="evidence" value="ECO:0000250"/>
    <property type="project" value="UniProtKB"/>
</dbReference>
<dbReference type="GO" id="GO:0005524">
    <property type="term" value="F:ATP binding"/>
    <property type="evidence" value="ECO:0007669"/>
    <property type="project" value="InterPro"/>
</dbReference>
<dbReference type="GO" id="GO:0046872">
    <property type="term" value="F:metal ion binding"/>
    <property type="evidence" value="ECO:0000318"/>
    <property type="project" value="GO_Central"/>
</dbReference>
<dbReference type="GO" id="GO:0044183">
    <property type="term" value="F:protein folding chaperone"/>
    <property type="evidence" value="ECO:0007669"/>
    <property type="project" value="InterPro"/>
</dbReference>
<dbReference type="GO" id="GO:0051087">
    <property type="term" value="F:protein-folding chaperone binding"/>
    <property type="evidence" value="ECO:0000250"/>
    <property type="project" value="UniProtKB"/>
</dbReference>
<dbReference type="GO" id="GO:0051082">
    <property type="term" value="F:unfolded protein binding"/>
    <property type="evidence" value="ECO:0000318"/>
    <property type="project" value="GO_Central"/>
</dbReference>
<dbReference type="GO" id="GO:0051085">
    <property type="term" value="P:chaperone cofactor-dependent protein refolding"/>
    <property type="evidence" value="ECO:0000318"/>
    <property type="project" value="GO_Central"/>
</dbReference>
<dbReference type="CDD" id="cd00320">
    <property type="entry name" value="cpn10"/>
    <property type="match status" value="1"/>
</dbReference>
<dbReference type="FunFam" id="2.30.33.40:FF:000002">
    <property type="entry name" value="10 kDa chaperonin, mitochondrial"/>
    <property type="match status" value="1"/>
</dbReference>
<dbReference type="Gene3D" id="2.30.33.40">
    <property type="entry name" value="GroES chaperonin"/>
    <property type="match status" value="1"/>
</dbReference>
<dbReference type="HAMAP" id="MF_00580">
    <property type="entry name" value="CH10"/>
    <property type="match status" value="1"/>
</dbReference>
<dbReference type="InterPro" id="IPR020818">
    <property type="entry name" value="Chaperonin_GroES"/>
</dbReference>
<dbReference type="InterPro" id="IPR037124">
    <property type="entry name" value="Chaperonin_GroES_sf"/>
</dbReference>
<dbReference type="InterPro" id="IPR018369">
    <property type="entry name" value="Chaprnonin_Cpn10_CS"/>
</dbReference>
<dbReference type="InterPro" id="IPR011032">
    <property type="entry name" value="GroES-like_sf"/>
</dbReference>
<dbReference type="PANTHER" id="PTHR10772">
    <property type="entry name" value="10 KDA HEAT SHOCK PROTEIN"/>
    <property type="match status" value="1"/>
</dbReference>
<dbReference type="PANTHER" id="PTHR10772:SF0">
    <property type="entry name" value="10 KDA HEAT SHOCK PROTEIN, MITOCHONDRIAL"/>
    <property type="match status" value="1"/>
</dbReference>
<dbReference type="Pfam" id="PF00166">
    <property type="entry name" value="Cpn10"/>
    <property type="match status" value="1"/>
</dbReference>
<dbReference type="PRINTS" id="PR00297">
    <property type="entry name" value="CHAPERONIN10"/>
</dbReference>
<dbReference type="SMART" id="SM00883">
    <property type="entry name" value="Cpn10"/>
    <property type="match status" value="1"/>
</dbReference>
<dbReference type="SUPFAM" id="SSF50129">
    <property type="entry name" value="GroES-like"/>
    <property type="match status" value="1"/>
</dbReference>
<dbReference type="PROSITE" id="PS00681">
    <property type="entry name" value="CHAPERONINS_CPN10"/>
    <property type="match status" value="1"/>
</dbReference>
<reference key="1">
    <citation type="journal article" date="1994" name="FEBS Lett.">
        <title>Isolation of a cDNA clone specifying rat chaperonin 10, a stress-inducible mitochondrial matrix protein synthesised without a cleavable presequence.</title>
        <authorList>
            <person name="Ryan M.T."/>
            <person name="Hoogenraad N.J."/>
            <person name="Hoej P.B."/>
        </authorList>
    </citation>
    <scope>NUCLEOTIDE SEQUENCE [MRNA]</scope>
    <source>
        <strain>Wistar</strain>
        <tissue>Liver</tissue>
    </source>
</reference>
<reference key="2">
    <citation type="journal article" date="2004" name="Genome Res.">
        <title>The status, quality, and expansion of the NIH full-length cDNA project: the Mammalian Gene Collection (MGC).</title>
        <authorList>
            <consortium name="The MGC Project Team"/>
        </authorList>
    </citation>
    <scope>NUCLEOTIDE SEQUENCE [LARGE SCALE MRNA]</scope>
    <source>
        <tissue>Pituitary</tissue>
    </source>
</reference>
<reference key="3">
    <citation type="journal article" date="1992" name="Proc. Natl. Acad. Sci. U.S.A.">
        <title>Identification of a mammalian 10-kDa heat shock protein, a mitochondrial chaperonin 10 homologue essential for assisted folding of trimeric ornithine transcarbamoylase in vitro.</title>
        <authorList>
            <person name="Hartman D.J."/>
            <person name="Hoogenraad N.J."/>
            <person name="Condron R."/>
            <person name="Hoej P.B."/>
        </authorList>
    </citation>
    <scope>PRELIMINARY PROTEIN SEQUENCE OF 2-102</scope>
    <scope>CLEAVAGE OF INITIATOR METHIONINE</scope>
    <scope>ACETYLATION AT ALA-2</scope>
    <source>
        <tissue>Liver</tissue>
    </source>
</reference>
<reference key="4">
    <citation type="journal article" date="1993" name="Biochim. Biophys. Acta">
        <title>The complete primary structure of rat chaperonin 10 reveals a putative beta alpha beta nucleotide-binding domain with homology to p21ras.</title>
        <authorList>
            <person name="Hartman D.J."/>
            <person name="Hoogenraad N.J."/>
            <person name="Condron R."/>
            <person name="Hoej P.B."/>
        </authorList>
    </citation>
    <scope>PROTEIN SEQUENCE OF 2-102</scope>
    <source>
        <tissue>Liver</tissue>
    </source>
</reference>
<reference key="5">
    <citation type="submission" date="2007-04" db="UniProtKB">
        <authorList>
            <person name="Lubec G."/>
            <person name="Afjehi-Sadat L."/>
            <person name="Diao W."/>
        </authorList>
    </citation>
    <scope>PROTEIN SEQUENCE OF 81-92</scope>
    <scope>IDENTIFICATION BY MASS SPECTROMETRY</scope>
    <source>
        <strain>Sprague-Dawley</strain>
        <tissue>Hippocampus</tissue>
        <tissue>Spinal cord</tissue>
    </source>
</reference>
<gene>
    <name type="primary">Hspe1</name>
</gene>
<organism>
    <name type="scientific">Rattus norvegicus</name>
    <name type="common">Rat</name>
    <dbReference type="NCBI Taxonomy" id="10116"/>
    <lineage>
        <taxon>Eukaryota</taxon>
        <taxon>Metazoa</taxon>
        <taxon>Chordata</taxon>
        <taxon>Craniata</taxon>
        <taxon>Vertebrata</taxon>
        <taxon>Euteleostomi</taxon>
        <taxon>Mammalia</taxon>
        <taxon>Eutheria</taxon>
        <taxon>Euarchontoglires</taxon>
        <taxon>Glires</taxon>
        <taxon>Rodentia</taxon>
        <taxon>Myomorpha</taxon>
        <taxon>Muroidea</taxon>
        <taxon>Muridae</taxon>
        <taxon>Murinae</taxon>
        <taxon>Rattus</taxon>
    </lineage>
</organism>
<sequence>MAGQAFRKFLPLFDRVLVERSAAETVTKGGIMLPEKSQGKVLQATVVAVGSGGKGKGGEIQPVSVKVGDKVLLPEYGGTKVVLDDKDYFLFRDGDILGKYVD</sequence>